<reference key="1">
    <citation type="journal article" date="1995" name="Microbiology">
        <title>Sequence around the 159 degree region of the Bacillus subtilis genome: the pksX locus spans 33.6 kb.</title>
        <authorList>
            <person name="Albertini A.M."/>
            <person name="Caramori T."/>
            <person name="Scoffone F."/>
            <person name="Scotti C."/>
            <person name="Galizzi A."/>
        </authorList>
    </citation>
    <scope>NUCLEOTIDE SEQUENCE [GENOMIC DNA]</scope>
    <source>
        <strain>168 / PB1424</strain>
    </source>
</reference>
<reference key="2">
    <citation type="journal article" date="1997" name="Nature">
        <title>The complete genome sequence of the Gram-positive bacterium Bacillus subtilis.</title>
        <authorList>
            <person name="Kunst F."/>
            <person name="Ogasawara N."/>
            <person name="Moszer I."/>
            <person name="Albertini A.M."/>
            <person name="Alloni G."/>
            <person name="Azevedo V."/>
            <person name="Bertero M.G."/>
            <person name="Bessieres P."/>
            <person name="Bolotin A."/>
            <person name="Borchert S."/>
            <person name="Borriss R."/>
            <person name="Boursier L."/>
            <person name="Brans A."/>
            <person name="Braun M."/>
            <person name="Brignell S.C."/>
            <person name="Bron S."/>
            <person name="Brouillet S."/>
            <person name="Bruschi C.V."/>
            <person name="Caldwell B."/>
            <person name="Capuano V."/>
            <person name="Carter N.M."/>
            <person name="Choi S.-K."/>
            <person name="Codani J.-J."/>
            <person name="Connerton I.F."/>
            <person name="Cummings N.J."/>
            <person name="Daniel R.A."/>
            <person name="Denizot F."/>
            <person name="Devine K.M."/>
            <person name="Duesterhoeft A."/>
            <person name="Ehrlich S.D."/>
            <person name="Emmerson P.T."/>
            <person name="Entian K.-D."/>
            <person name="Errington J."/>
            <person name="Fabret C."/>
            <person name="Ferrari E."/>
            <person name="Foulger D."/>
            <person name="Fritz C."/>
            <person name="Fujita M."/>
            <person name="Fujita Y."/>
            <person name="Fuma S."/>
            <person name="Galizzi A."/>
            <person name="Galleron N."/>
            <person name="Ghim S.-Y."/>
            <person name="Glaser P."/>
            <person name="Goffeau A."/>
            <person name="Golightly E.J."/>
            <person name="Grandi G."/>
            <person name="Guiseppi G."/>
            <person name="Guy B.J."/>
            <person name="Haga K."/>
            <person name="Haiech J."/>
            <person name="Harwood C.R."/>
            <person name="Henaut A."/>
            <person name="Hilbert H."/>
            <person name="Holsappel S."/>
            <person name="Hosono S."/>
            <person name="Hullo M.-F."/>
            <person name="Itaya M."/>
            <person name="Jones L.-M."/>
            <person name="Joris B."/>
            <person name="Karamata D."/>
            <person name="Kasahara Y."/>
            <person name="Klaerr-Blanchard M."/>
            <person name="Klein C."/>
            <person name="Kobayashi Y."/>
            <person name="Koetter P."/>
            <person name="Koningstein G."/>
            <person name="Krogh S."/>
            <person name="Kumano M."/>
            <person name="Kurita K."/>
            <person name="Lapidus A."/>
            <person name="Lardinois S."/>
            <person name="Lauber J."/>
            <person name="Lazarevic V."/>
            <person name="Lee S.-M."/>
            <person name="Levine A."/>
            <person name="Liu H."/>
            <person name="Masuda S."/>
            <person name="Mauel C."/>
            <person name="Medigue C."/>
            <person name="Medina N."/>
            <person name="Mellado R.P."/>
            <person name="Mizuno M."/>
            <person name="Moestl D."/>
            <person name="Nakai S."/>
            <person name="Noback M."/>
            <person name="Noone D."/>
            <person name="O'Reilly M."/>
            <person name="Ogawa K."/>
            <person name="Ogiwara A."/>
            <person name="Oudega B."/>
            <person name="Park S.-H."/>
            <person name="Parro V."/>
            <person name="Pohl T.M."/>
            <person name="Portetelle D."/>
            <person name="Porwollik S."/>
            <person name="Prescott A.M."/>
            <person name="Presecan E."/>
            <person name="Pujic P."/>
            <person name="Purnelle B."/>
            <person name="Rapoport G."/>
            <person name="Rey M."/>
            <person name="Reynolds S."/>
            <person name="Rieger M."/>
            <person name="Rivolta C."/>
            <person name="Rocha E."/>
            <person name="Roche B."/>
            <person name="Rose M."/>
            <person name="Sadaie Y."/>
            <person name="Sato T."/>
            <person name="Scanlan E."/>
            <person name="Schleich S."/>
            <person name="Schroeter R."/>
            <person name="Scoffone F."/>
            <person name="Sekiguchi J."/>
            <person name="Sekowska A."/>
            <person name="Seror S.J."/>
            <person name="Serror P."/>
            <person name="Shin B.-S."/>
            <person name="Soldo B."/>
            <person name="Sorokin A."/>
            <person name="Tacconi E."/>
            <person name="Takagi T."/>
            <person name="Takahashi H."/>
            <person name="Takemaru K."/>
            <person name="Takeuchi M."/>
            <person name="Tamakoshi A."/>
            <person name="Tanaka T."/>
            <person name="Terpstra P."/>
            <person name="Tognoni A."/>
            <person name="Tosato V."/>
            <person name="Uchiyama S."/>
            <person name="Vandenbol M."/>
            <person name="Vannier F."/>
            <person name="Vassarotti A."/>
            <person name="Viari A."/>
            <person name="Wambutt R."/>
            <person name="Wedler E."/>
            <person name="Wedler H."/>
            <person name="Weitzenegger T."/>
            <person name="Winters P."/>
            <person name="Wipat A."/>
            <person name="Yamamoto H."/>
            <person name="Yamane K."/>
            <person name="Yasumoto K."/>
            <person name="Yata K."/>
            <person name="Yoshida K."/>
            <person name="Yoshikawa H.-F."/>
            <person name="Zumstein E."/>
            <person name="Yoshikawa H."/>
            <person name="Danchin A."/>
        </authorList>
    </citation>
    <scope>NUCLEOTIDE SEQUENCE [LARGE SCALE GENOMIC DNA]</scope>
    <source>
        <strain>168</strain>
    </source>
</reference>
<reference key="3">
    <citation type="journal article" date="2009" name="Microbiology">
        <title>From a consortium sequence to a unified sequence: the Bacillus subtilis 168 reference genome a decade later.</title>
        <authorList>
            <person name="Barbe V."/>
            <person name="Cruveiller S."/>
            <person name="Kunst F."/>
            <person name="Lenoble P."/>
            <person name="Meurice G."/>
            <person name="Sekowska A."/>
            <person name="Vallenet D."/>
            <person name="Wang T."/>
            <person name="Moszer I."/>
            <person name="Medigue C."/>
            <person name="Danchin A."/>
        </authorList>
    </citation>
    <scope>SEQUENCE REVISION TO 189</scope>
</reference>
<reference key="4">
    <citation type="journal article" date="2006" name="Proc. Natl. Acad. Sci. U.S.A.">
        <title>Convergence of isoprene and polyketide biosynthetic machinery: isoprenyl-S-carrier proteins in the pksX pathway of Bacillus subtilis.</title>
        <authorList>
            <person name="Calderone C.T."/>
            <person name="Kowtoniuk W.E."/>
            <person name="Kelleher N.L."/>
            <person name="Walsh C.T."/>
            <person name="Dorrestein P.C."/>
        </authorList>
    </citation>
    <scope>FUNCTION</scope>
</reference>
<reference key="5">
    <citation type="journal article" date="2007" name="Proc. Natl. Acad. Sci. U.S.A.">
        <title>A singular enzymatic megacomplex from Bacillus subtilis.</title>
        <authorList>
            <person name="Straight P.D."/>
            <person name="Fischbach M.A."/>
            <person name="Walsh C.T."/>
            <person name="Rudner D.Z."/>
            <person name="Kolter R."/>
        </authorList>
    </citation>
    <scope>SUBCELLULAR LOCATION</scope>
    <source>
        <strain>168 / Marburg / ATCC 6051 / DSM 10 / JCM 1465 / NBRC 13719 / NCIMB 3610 / NRRL NRS-744 / VKM B-501</strain>
    </source>
</reference>
<reference key="6">
    <citation type="journal article" date="2007" name="Proc. Natl. Acad. Sci. U.S.A.">
        <title>The identification of bacillaene, the product of the PksX megacomplex in Bacillus subtilis.</title>
        <authorList>
            <person name="Butcher R.A."/>
            <person name="Schroeder F.C."/>
            <person name="Fischbach M.A."/>
            <person name="Straight P.D."/>
            <person name="Kolter R."/>
            <person name="Walsh C.T."/>
            <person name="Clardy J."/>
        </authorList>
    </citation>
    <scope>FUNCTION</scope>
    <scope>PATHWAY</scope>
    <source>
        <strain>168 / Marburg / ATCC 6051 / DSM 10 / JCM 1465 / NBRC 13719 / NCIMB 3610 / NRRL NRS-744 / VKM B-501</strain>
    </source>
</reference>
<reference evidence="7 8 9 10 11" key="7">
    <citation type="journal article" date="2020" name="Sci. Rep.">
        <title>Structure and mechanism of a dehydratase/decarboxylase enzyme couple involved in polyketide beta-methyl branch incorporation.</title>
        <authorList>
            <person name="Nair A.V."/>
            <person name="Robson A."/>
            <person name="Ackrill T.D."/>
            <person name="Till M."/>
            <person name="Byrne M.J."/>
            <person name="Back C.R."/>
            <person name="Tiwari K."/>
            <person name="Davies J.A."/>
            <person name="Willis C.L."/>
            <person name="Race P.R."/>
        </authorList>
    </citation>
    <scope>X-RAY CRYSTALLOGRAPHY (1.75 ANGSTROMS) OF APO FORM AND OF MUTANTS LYS-80; HIS-230 AND LYS-232</scope>
    <scope>FUNCTION</scope>
    <scope>SUBUNIT</scope>
    <scope>ACTIVE SITE</scope>
    <scope>IDENTIFICATION BY MASS SPECTROMETRY</scope>
    <scope>MUTAGENESIS OF LYS-80; HIS-230; LYS-232 AND HIS-235</scope>
</reference>
<evidence type="ECO:0000269" key="1">
    <source>
    </source>
</evidence>
<evidence type="ECO:0000269" key="2">
    <source>
    </source>
</evidence>
<evidence type="ECO:0000269" key="3">
    <source>
    </source>
</evidence>
<evidence type="ECO:0000269" key="4">
    <source>
    </source>
</evidence>
<evidence type="ECO:0000303" key="5">
    <source>
    </source>
</evidence>
<evidence type="ECO:0000305" key="6"/>
<evidence type="ECO:0007744" key="7">
    <source>
        <dbReference type="PDB" id="4Q1G"/>
    </source>
</evidence>
<evidence type="ECO:0007744" key="8">
    <source>
        <dbReference type="PDB" id="4Q1H"/>
    </source>
</evidence>
<evidence type="ECO:0007744" key="9">
    <source>
        <dbReference type="PDB" id="4Q1I"/>
    </source>
</evidence>
<evidence type="ECO:0007744" key="10">
    <source>
        <dbReference type="PDB" id="4Q1J"/>
    </source>
</evidence>
<evidence type="ECO:0007744" key="11">
    <source>
        <dbReference type="PDB" id="4Q1K"/>
    </source>
</evidence>
<evidence type="ECO:0007829" key="12">
    <source>
        <dbReference type="PDB" id="4Q1G"/>
    </source>
</evidence>
<evidence type="ECO:0007829" key="13">
    <source>
        <dbReference type="PDB" id="4Q1H"/>
    </source>
</evidence>
<evidence type="ECO:0007829" key="14">
    <source>
        <dbReference type="PDB" id="4Q1K"/>
    </source>
</evidence>
<comment type="function">
    <text evidence="1 3 4">Involved in some intermediate steps for the synthesis of the antibiotic polyketide bacillaene which is involved in secondary metabolism (PubMed:17234808). Catalyzes the decarboxylation of the 3-methylglutaconyl group tethered to PksL to a 3-methylcrotonyl moiety (PubMed:16757561, PubMed:17234808, PubMed:32948786).</text>
</comment>
<comment type="pathway">
    <text evidence="3">Antibiotic biosynthesis; bacillaene biosynthesis.</text>
</comment>
<comment type="subunit">
    <text evidence="4">Homotrimer (PubMed:32948786). Does not form a heterotrimeric complex with PksH (PubMed:32948786).</text>
</comment>
<comment type="subcellular location">
    <subcellularLocation>
        <location evidence="2">Cytoplasm</location>
    </subcellularLocation>
</comment>
<comment type="similarity">
    <text evidence="6">Belongs to the enoyl-CoA hydratase/isomerase family.</text>
</comment>
<protein>
    <recommendedName>
        <fullName evidence="5">Bacillaene synthase decarboxylase PksI</fullName>
        <ecNumber>4.-.-.-</ecNumber>
    </recommendedName>
    <alternativeName>
        <fullName evidence="6">Putative polyketide biosynthesis enoyl-CoA isomerase</fullName>
    </alternativeName>
</protein>
<proteinExistence type="evidence at protein level"/>
<accession>P40802</accession>
<feature type="chain" id="PRO_0000109347" description="Bacillaene synthase decarboxylase PksI">
    <location>
        <begin position="1"/>
        <end position="249"/>
    </location>
</feature>
<feature type="active site" evidence="4 11">
    <location>
        <position position="230"/>
    </location>
</feature>
<feature type="mutagenesis site" description="Does not affect the enzymatic activity." evidence="4">
    <original>K</original>
    <variation>A</variation>
    <location>
        <position position="80"/>
    </location>
</feature>
<feature type="mutagenesis site" description="Reduces the enzymatic activity." evidence="4">
    <original>H</original>
    <variation>A</variation>
    <location>
        <position position="230"/>
    </location>
</feature>
<feature type="mutagenesis site" description="Does not affect the enzymatic activity." evidence="4">
    <original>K</original>
    <variation>A</variation>
    <location>
        <position position="232"/>
    </location>
</feature>
<feature type="mutagenesis site" description="Does not affect the enzymatic activity." evidence="4">
    <original>H</original>
    <variation>A</variation>
    <location>
        <position position="235"/>
    </location>
</feature>
<feature type="sequence conflict" description="In Ref. 1; AAA85142." evidence="6" ref="1">
    <original>A</original>
    <variation>E</variation>
    <location>
        <position position="189"/>
    </location>
</feature>
<feature type="strand" evidence="14">
    <location>
        <begin position="4"/>
        <end position="12"/>
    </location>
</feature>
<feature type="strand" evidence="14">
    <location>
        <begin position="15"/>
        <end position="20"/>
    </location>
</feature>
<feature type="helix" evidence="14">
    <location>
        <begin position="23"/>
        <end position="25"/>
    </location>
</feature>
<feature type="helix" evidence="14">
    <location>
        <begin position="31"/>
        <end position="46"/>
    </location>
</feature>
<feature type="strand" evidence="14">
    <location>
        <begin position="51"/>
        <end position="56"/>
    </location>
</feature>
<feature type="strand" evidence="14">
    <location>
        <begin position="61"/>
        <end position="63"/>
    </location>
</feature>
<feature type="helix" evidence="14">
    <location>
        <begin position="68"/>
        <end position="75"/>
    </location>
</feature>
<feature type="helix" evidence="13">
    <location>
        <begin position="81"/>
        <end position="83"/>
    </location>
</feature>
<feature type="helix" evidence="14">
    <location>
        <begin position="86"/>
        <end position="88"/>
    </location>
</feature>
<feature type="helix" evidence="14">
    <location>
        <begin position="89"/>
        <end position="92"/>
    </location>
</feature>
<feature type="strand" evidence="14">
    <location>
        <begin position="93"/>
        <end position="95"/>
    </location>
</feature>
<feature type="strand" evidence="14">
    <location>
        <begin position="97"/>
        <end position="101"/>
    </location>
</feature>
<feature type="strand" evidence="14">
    <location>
        <begin position="103"/>
        <end position="106"/>
    </location>
</feature>
<feature type="helix" evidence="14">
    <location>
        <begin position="108"/>
        <end position="114"/>
    </location>
</feature>
<feature type="strand" evidence="14">
    <location>
        <begin position="116"/>
        <end position="122"/>
    </location>
</feature>
<feature type="strand" evidence="14">
    <location>
        <begin position="125"/>
        <end position="128"/>
    </location>
</feature>
<feature type="helix" evidence="14">
    <location>
        <begin position="131"/>
        <end position="134"/>
    </location>
</feature>
<feature type="helix" evidence="14">
    <location>
        <begin position="142"/>
        <end position="150"/>
    </location>
</feature>
<feature type="helix" evidence="14">
    <location>
        <begin position="152"/>
        <end position="161"/>
    </location>
</feature>
<feature type="strand" evidence="14">
    <location>
        <begin position="164"/>
        <end position="166"/>
    </location>
</feature>
<feature type="helix" evidence="14">
    <location>
        <begin position="167"/>
        <end position="173"/>
    </location>
</feature>
<feature type="strand" evidence="14">
    <location>
        <begin position="176"/>
        <end position="180"/>
    </location>
</feature>
<feature type="helix" evidence="14">
    <location>
        <begin position="182"/>
        <end position="196"/>
    </location>
</feature>
<feature type="helix" evidence="14">
    <location>
        <begin position="201"/>
        <end position="232"/>
    </location>
</feature>
<feature type="strand" evidence="12">
    <location>
        <begin position="234"/>
        <end position="236"/>
    </location>
</feature>
<feature type="helix" evidence="14">
    <location>
        <begin position="237"/>
        <end position="246"/>
    </location>
</feature>
<organism>
    <name type="scientific">Bacillus subtilis (strain 168)</name>
    <dbReference type="NCBI Taxonomy" id="224308"/>
    <lineage>
        <taxon>Bacteria</taxon>
        <taxon>Bacillati</taxon>
        <taxon>Bacillota</taxon>
        <taxon>Bacilli</taxon>
        <taxon>Bacillales</taxon>
        <taxon>Bacillaceae</taxon>
        <taxon>Bacillus</taxon>
    </lineage>
</organism>
<name>PKSI_BACSU</name>
<gene>
    <name type="primary">pksI</name>
    <name type="ordered locus">BSU17170</name>
</gene>
<keyword id="KW-0002">3D-structure</keyword>
<keyword id="KW-0045">Antibiotic biosynthesis</keyword>
<keyword id="KW-0963">Cytoplasm</keyword>
<keyword id="KW-0456">Lyase</keyword>
<keyword id="KW-1185">Reference proteome</keyword>
<sequence length="249" mass="27896">MTHSVVELIEIESAIIQVKMQDRTHKNAFSQELTDDLIQAFEYIRQNPKYKAVILTGYDNYFASGGTQEGLLRIQQGLTKFTDDNLYSLALDCEIPVIAAMQGHGIGGGFVMGLFADIVILSRESVYTANFMKYGFTPGMGATFIVPKKLGFSLAQEILLNAGSYRGADLEKRGVPFKVLPRAEVLDYAVELAQELAEKPRNSLVTLKDHLVAPLRDQLPRVIEQELMMHEKTFHHEEVKSRIKGLYGN</sequence>
<dbReference type="EC" id="4.-.-.-"/>
<dbReference type="EMBL" id="U11039">
    <property type="protein sequence ID" value="AAA85142.1"/>
    <property type="molecule type" value="Genomic_DNA"/>
</dbReference>
<dbReference type="EMBL" id="AL009126">
    <property type="protein sequence ID" value="CAB13588.2"/>
    <property type="molecule type" value="Genomic_DNA"/>
</dbReference>
<dbReference type="PIR" id="G69678">
    <property type="entry name" value="G69678"/>
</dbReference>
<dbReference type="RefSeq" id="NP_389597.2">
    <property type="nucleotide sequence ID" value="NC_000964.3"/>
</dbReference>
<dbReference type="RefSeq" id="WP_003231800.1">
    <property type="nucleotide sequence ID" value="NZ_OZ025638.1"/>
</dbReference>
<dbReference type="PDB" id="4Q1G">
    <property type="method" value="X-ray"/>
    <property type="resolution" value="2.10 A"/>
    <property type="chains" value="A/B/C=1-249"/>
</dbReference>
<dbReference type="PDB" id="4Q1H">
    <property type="method" value="X-ray"/>
    <property type="resolution" value="1.93 A"/>
    <property type="chains" value="A/B/C=1-249"/>
</dbReference>
<dbReference type="PDB" id="4Q1I">
    <property type="method" value="X-ray"/>
    <property type="resolution" value="2.10 A"/>
    <property type="chains" value="A/B/C=1-249"/>
</dbReference>
<dbReference type="PDB" id="4Q1J">
    <property type="method" value="X-ray"/>
    <property type="resolution" value="2.17 A"/>
    <property type="chains" value="A/B/C=1-249"/>
</dbReference>
<dbReference type="PDB" id="4Q1K">
    <property type="method" value="X-ray"/>
    <property type="resolution" value="1.75 A"/>
    <property type="chains" value="A/B/C=1-249"/>
</dbReference>
<dbReference type="PDBsum" id="4Q1G"/>
<dbReference type="PDBsum" id="4Q1H"/>
<dbReference type="PDBsum" id="4Q1I"/>
<dbReference type="PDBsum" id="4Q1J"/>
<dbReference type="PDBsum" id="4Q1K"/>
<dbReference type="SMR" id="P40802"/>
<dbReference type="FunCoup" id="P40802">
    <property type="interactions" value="17"/>
</dbReference>
<dbReference type="STRING" id="224308.BSU17170"/>
<dbReference type="PaxDb" id="224308-BSU17170"/>
<dbReference type="EnsemblBacteria" id="CAB13588">
    <property type="protein sequence ID" value="CAB13588"/>
    <property type="gene ID" value="BSU_17170"/>
</dbReference>
<dbReference type="GeneID" id="940096"/>
<dbReference type="KEGG" id="bsu:BSU17170"/>
<dbReference type="PATRIC" id="fig|224308.179.peg.1862"/>
<dbReference type="eggNOG" id="COG1024">
    <property type="taxonomic scope" value="Bacteria"/>
</dbReference>
<dbReference type="InParanoid" id="P40802"/>
<dbReference type="OrthoDB" id="9775794at2"/>
<dbReference type="PhylomeDB" id="P40802"/>
<dbReference type="BioCyc" id="BSUB:BSU17170-MONOMER"/>
<dbReference type="UniPathway" id="UPA01003"/>
<dbReference type="EvolutionaryTrace" id="P40802"/>
<dbReference type="Proteomes" id="UP000001570">
    <property type="component" value="Chromosome"/>
</dbReference>
<dbReference type="GO" id="GO:0005737">
    <property type="term" value="C:cytoplasm"/>
    <property type="evidence" value="ECO:0007669"/>
    <property type="project" value="UniProtKB-SubCell"/>
</dbReference>
<dbReference type="GO" id="GO:0016829">
    <property type="term" value="F:lyase activity"/>
    <property type="evidence" value="ECO:0007669"/>
    <property type="project" value="UniProtKB-KW"/>
</dbReference>
<dbReference type="GO" id="GO:0017000">
    <property type="term" value="P:antibiotic biosynthetic process"/>
    <property type="evidence" value="ECO:0007669"/>
    <property type="project" value="UniProtKB-KW"/>
</dbReference>
<dbReference type="GO" id="GO:0006635">
    <property type="term" value="P:fatty acid beta-oxidation"/>
    <property type="evidence" value="ECO:0000318"/>
    <property type="project" value="GO_Central"/>
</dbReference>
<dbReference type="CDD" id="cd06558">
    <property type="entry name" value="crotonase-like"/>
    <property type="match status" value="1"/>
</dbReference>
<dbReference type="Gene3D" id="6.20.390.20">
    <property type="match status" value="1"/>
</dbReference>
<dbReference type="Gene3D" id="3.90.226.10">
    <property type="entry name" value="2-enoyl-CoA Hydratase, Chain A, domain 1"/>
    <property type="match status" value="1"/>
</dbReference>
<dbReference type="InterPro" id="IPR029045">
    <property type="entry name" value="ClpP/crotonase-like_dom_sf"/>
</dbReference>
<dbReference type="InterPro" id="IPR018376">
    <property type="entry name" value="Enoyl-CoA_hyd/isom_CS"/>
</dbReference>
<dbReference type="InterPro" id="IPR001753">
    <property type="entry name" value="Enoyl-CoA_hydra/iso"/>
</dbReference>
<dbReference type="NCBIfam" id="NF005496">
    <property type="entry name" value="PRK07110.1"/>
    <property type="match status" value="1"/>
</dbReference>
<dbReference type="PANTHER" id="PTHR11941:SF133">
    <property type="entry name" value="1,2-EPOXYPHENYLACETYL-COA ISOMERASE"/>
    <property type="match status" value="1"/>
</dbReference>
<dbReference type="PANTHER" id="PTHR11941">
    <property type="entry name" value="ENOYL-COA HYDRATASE-RELATED"/>
    <property type="match status" value="1"/>
</dbReference>
<dbReference type="Pfam" id="PF00378">
    <property type="entry name" value="ECH_1"/>
    <property type="match status" value="1"/>
</dbReference>
<dbReference type="SUPFAM" id="SSF52096">
    <property type="entry name" value="ClpP/crotonase"/>
    <property type="match status" value="1"/>
</dbReference>
<dbReference type="PROSITE" id="PS00166">
    <property type="entry name" value="ENOYL_COA_HYDRATASE"/>
    <property type="match status" value="1"/>
</dbReference>